<sequence length="340" mass="37372">MELAYIPSPARGVLYLGPIPLRGYAFCIIIGVFVAVWLGNKRWVARGGRPGTVADIAVWAVPFGLVGGRLYHVITDYELYFSEGRDWVDAFKIWEGGLGIWGAIALGAVGAWIGCRRRGIPLPAWADAVAPGIAFAQAFGRWGNWFNQELYGRETHVPWALHITSSTDGRVPGYYHPTFLYESLWCVGVGFLVIWADRRFKLGHGRAFALYVAAYCVGRAWIEYMRVDDAHHILGVRLNDWTAIAVFLLAVLYIVLSSRKRPGREEIVEPGASDTGTGADDPVDLGKDEDKATTDKATATDTSTTTDKSTDRGKNEDENEGEDAEPSEKTESAAESAKKV</sequence>
<keyword id="KW-1003">Cell membrane</keyword>
<keyword id="KW-0472">Membrane</keyword>
<keyword id="KW-1185">Reference proteome</keyword>
<keyword id="KW-0808">Transferase</keyword>
<keyword id="KW-0812">Transmembrane</keyword>
<keyword id="KW-1133">Transmembrane helix</keyword>
<comment type="function">
    <text evidence="1">Catalyzes the transfer of the diacylglyceryl group from phosphatidylglycerol to the sulfhydryl group of the N-terminal cysteine of a prolipoprotein, the first step in the formation of mature lipoproteins.</text>
</comment>
<comment type="catalytic activity">
    <reaction evidence="1">
        <text>L-cysteinyl-[prolipoprotein] + a 1,2-diacyl-sn-glycero-3-phospho-(1'-sn-glycerol) = an S-1,2-diacyl-sn-glyceryl-L-cysteinyl-[prolipoprotein] + sn-glycerol 1-phosphate + H(+)</text>
        <dbReference type="Rhea" id="RHEA:56712"/>
        <dbReference type="Rhea" id="RHEA-COMP:14679"/>
        <dbReference type="Rhea" id="RHEA-COMP:14680"/>
        <dbReference type="ChEBI" id="CHEBI:15378"/>
        <dbReference type="ChEBI" id="CHEBI:29950"/>
        <dbReference type="ChEBI" id="CHEBI:57685"/>
        <dbReference type="ChEBI" id="CHEBI:64716"/>
        <dbReference type="ChEBI" id="CHEBI:140658"/>
        <dbReference type="EC" id="2.5.1.145"/>
    </reaction>
</comment>
<comment type="pathway">
    <text evidence="1">Protein modification; lipoprotein biosynthesis (diacylglyceryl transfer).</text>
</comment>
<comment type="subcellular location">
    <subcellularLocation>
        <location evidence="1">Cell membrane</location>
        <topology evidence="1">Multi-pass membrane protein</topology>
    </subcellularLocation>
</comment>
<comment type="similarity">
    <text evidence="1">Belongs to the Lgt family.</text>
</comment>
<protein>
    <recommendedName>
        <fullName evidence="1">Phosphatidylglycerol--prolipoprotein diacylglyceryl transferase</fullName>
        <ecNumber evidence="1">2.5.1.145</ecNumber>
    </recommendedName>
</protein>
<proteinExistence type="inferred from homology"/>
<organism>
    <name type="scientific">Streptomyces avermitilis (strain ATCC 31267 / DSM 46492 / JCM 5070 / NBRC 14893 / NCIMB 12804 / NRRL 8165 / MA-4680)</name>
    <dbReference type="NCBI Taxonomy" id="227882"/>
    <lineage>
        <taxon>Bacteria</taxon>
        <taxon>Bacillati</taxon>
        <taxon>Actinomycetota</taxon>
        <taxon>Actinomycetes</taxon>
        <taxon>Kitasatosporales</taxon>
        <taxon>Streptomycetaceae</taxon>
        <taxon>Streptomyces</taxon>
    </lineage>
</organism>
<dbReference type="EC" id="2.5.1.145" evidence="1"/>
<dbReference type="EMBL" id="BA000030">
    <property type="protein sequence ID" value="BAC73891.1"/>
    <property type="molecule type" value="Genomic_DNA"/>
</dbReference>
<dbReference type="SMR" id="Q82A79"/>
<dbReference type="KEGG" id="sma:SAVERM_6180"/>
<dbReference type="eggNOG" id="COG0682">
    <property type="taxonomic scope" value="Bacteria"/>
</dbReference>
<dbReference type="HOGENOM" id="CLU_013386_2_0_11"/>
<dbReference type="OrthoDB" id="871140at2"/>
<dbReference type="UniPathway" id="UPA00664"/>
<dbReference type="Proteomes" id="UP000000428">
    <property type="component" value="Chromosome"/>
</dbReference>
<dbReference type="GO" id="GO:0005886">
    <property type="term" value="C:plasma membrane"/>
    <property type="evidence" value="ECO:0007669"/>
    <property type="project" value="UniProtKB-SubCell"/>
</dbReference>
<dbReference type="GO" id="GO:0008961">
    <property type="term" value="F:phosphatidylglycerol-prolipoprotein diacylglyceryl transferase activity"/>
    <property type="evidence" value="ECO:0007669"/>
    <property type="project" value="UniProtKB-UniRule"/>
</dbReference>
<dbReference type="GO" id="GO:0042158">
    <property type="term" value="P:lipoprotein biosynthetic process"/>
    <property type="evidence" value="ECO:0007669"/>
    <property type="project" value="UniProtKB-UniRule"/>
</dbReference>
<dbReference type="HAMAP" id="MF_01147">
    <property type="entry name" value="Lgt"/>
    <property type="match status" value="1"/>
</dbReference>
<dbReference type="InterPro" id="IPR001640">
    <property type="entry name" value="Lgt"/>
</dbReference>
<dbReference type="NCBIfam" id="TIGR00544">
    <property type="entry name" value="lgt"/>
    <property type="match status" value="1"/>
</dbReference>
<dbReference type="PANTHER" id="PTHR30589:SF0">
    <property type="entry name" value="PHOSPHATIDYLGLYCEROL--PROLIPOPROTEIN DIACYLGLYCERYL TRANSFERASE"/>
    <property type="match status" value="1"/>
</dbReference>
<dbReference type="PANTHER" id="PTHR30589">
    <property type="entry name" value="PROLIPOPROTEIN DIACYLGLYCERYL TRANSFERASE"/>
    <property type="match status" value="1"/>
</dbReference>
<dbReference type="Pfam" id="PF01790">
    <property type="entry name" value="LGT"/>
    <property type="match status" value="1"/>
</dbReference>
<dbReference type="PROSITE" id="PS01311">
    <property type="entry name" value="LGT"/>
    <property type="match status" value="1"/>
</dbReference>
<name>LGT_STRAW</name>
<reference key="1">
    <citation type="journal article" date="2001" name="Proc. Natl. Acad. Sci. U.S.A.">
        <title>Genome sequence of an industrial microorganism Streptomyces avermitilis: deducing the ability of producing secondary metabolites.</title>
        <authorList>
            <person name="Omura S."/>
            <person name="Ikeda H."/>
            <person name="Ishikawa J."/>
            <person name="Hanamoto A."/>
            <person name="Takahashi C."/>
            <person name="Shinose M."/>
            <person name="Takahashi Y."/>
            <person name="Horikawa H."/>
            <person name="Nakazawa H."/>
            <person name="Osonoe T."/>
            <person name="Kikuchi H."/>
            <person name="Shiba T."/>
            <person name="Sakaki Y."/>
            <person name="Hattori M."/>
        </authorList>
    </citation>
    <scope>NUCLEOTIDE SEQUENCE [LARGE SCALE GENOMIC DNA]</scope>
    <source>
        <strain>ATCC 31267 / DSM 46492 / JCM 5070 / NBRC 14893 / NCIMB 12804 / NRRL 8165 / MA-4680</strain>
    </source>
</reference>
<reference key="2">
    <citation type="journal article" date="2003" name="Nat. Biotechnol.">
        <title>Complete genome sequence and comparative analysis of the industrial microorganism Streptomyces avermitilis.</title>
        <authorList>
            <person name="Ikeda H."/>
            <person name="Ishikawa J."/>
            <person name="Hanamoto A."/>
            <person name="Shinose M."/>
            <person name="Kikuchi H."/>
            <person name="Shiba T."/>
            <person name="Sakaki Y."/>
            <person name="Hattori M."/>
            <person name="Omura S."/>
        </authorList>
    </citation>
    <scope>NUCLEOTIDE SEQUENCE [LARGE SCALE GENOMIC DNA]</scope>
    <source>
        <strain>ATCC 31267 / DSM 46492 / JCM 5070 / NBRC 14893 / NCIMB 12804 / NRRL 8165 / MA-4680</strain>
    </source>
</reference>
<accession>Q82A79</accession>
<gene>
    <name evidence="1" type="primary">lgt</name>
    <name type="ordered locus">SAV_6180</name>
</gene>
<feature type="chain" id="PRO_0000172684" description="Phosphatidylglycerol--prolipoprotein diacylglyceryl transferase">
    <location>
        <begin position="1"/>
        <end position="340"/>
    </location>
</feature>
<feature type="transmembrane region" description="Helical" evidence="1">
    <location>
        <begin position="19"/>
        <end position="39"/>
    </location>
</feature>
<feature type="transmembrane region" description="Helical" evidence="1">
    <location>
        <begin position="54"/>
        <end position="74"/>
    </location>
</feature>
<feature type="transmembrane region" description="Helical" evidence="1">
    <location>
        <begin position="93"/>
        <end position="113"/>
    </location>
</feature>
<feature type="transmembrane region" description="Helical" evidence="1">
    <location>
        <begin position="119"/>
        <end position="139"/>
    </location>
</feature>
<feature type="transmembrane region" description="Helical" evidence="1">
    <location>
        <begin position="176"/>
        <end position="196"/>
    </location>
</feature>
<feature type="transmembrane region" description="Helical" evidence="1">
    <location>
        <begin position="202"/>
        <end position="221"/>
    </location>
</feature>
<feature type="transmembrane region" description="Helical" evidence="1">
    <location>
        <begin position="238"/>
        <end position="258"/>
    </location>
</feature>
<feature type="region of interest" description="Disordered" evidence="2">
    <location>
        <begin position="266"/>
        <end position="340"/>
    </location>
</feature>
<feature type="compositionally biased region" description="Basic and acidic residues" evidence="2">
    <location>
        <begin position="284"/>
        <end position="294"/>
    </location>
</feature>
<feature type="compositionally biased region" description="Low complexity" evidence="2">
    <location>
        <begin position="295"/>
        <end position="307"/>
    </location>
</feature>
<feature type="compositionally biased region" description="Basic and acidic residues" evidence="2">
    <location>
        <begin position="326"/>
        <end position="340"/>
    </location>
</feature>
<feature type="binding site" evidence="1">
    <location>
        <position position="141"/>
    </location>
    <ligand>
        <name>a 1,2-diacyl-sn-glycero-3-phospho-(1'-sn-glycerol)</name>
        <dbReference type="ChEBI" id="CHEBI:64716"/>
    </ligand>
</feature>
<evidence type="ECO:0000255" key="1">
    <source>
        <dbReference type="HAMAP-Rule" id="MF_01147"/>
    </source>
</evidence>
<evidence type="ECO:0000256" key="2">
    <source>
        <dbReference type="SAM" id="MobiDB-lite"/>
    </source>
</evidence>